<accession>Q9XD50</accession>
<name>YCIB_VITS1</name>
<keyword id="KW-0997">Cell inner membrane</keyword>
<keyword id="KW-1003">Cell membrane</keyword>
<keyword id="KW-0472">Membrane</keyword>
<keyword id="KW-0812">Transmembrane</keyword>
<keyword id="KW-1133">Transmembrane helix</keyword>
<feature type="chain" id="PRO_0000206555" description="Inner membrane-spanning protein YciB">
    <location>
        <begin position="1"/>
        <end position="193"/>
    </location>
</feature>
<feature type="transmembrane region" description="Helical" evidence="1">
    <location>
        <begin position="5"/>
        <end position="25"/>
    </location>
</feature>
<feature type="transmembrane region" description="Helical" evidence="1">
    <location>
        <begin position="36"/>
        <end position="56"/>
    </location>
</feature>
<feature type="transmembrane region" description="Helical" evidence="1">
    <location>
        <begin position="67"/>
        <end position="87"/>
    </location>
</feature>
<feature type="transmembrane region" description="Helical" evidence="1">
    <location>
        <begin position="93"/>
        <end position="113"/>
    </location>
</feature>
<feature type="transmembrane region" description="Helical" evidence="1">
    <location>
        <begin position="138"/>
        <end position="158"/>
    </location>
</feature>
<feature type="transmembrane region" description="Helical" evidence="1">
    <location>
        <begin position="164"/>
        <end position="184"/>
    </location>
</feature>
<organism>
    <name type="scientific">Vitreoscilla sp. (strain C1)</name>
    <dbReference type="NCBI Taxonomy" id="96942"/>
    <lineage>
        <taxon>Bacteria</taxon>
        <taxon>Pseudomonadati</taxon>
        <taxon>Pseudomonadota</taxon>
        <taxon>Betaproteobacteria</taxon>
        <taxon>Neisseriales</taxon>
        <taxon>Neisseriaceae</taxon>
        <taxon>Vitreoscilla</taxon>
    </lineage>
</organism>
<reference key="1">
    <citation type="submission" date="1998-12" db="EMBL/GenBank/DDBJ databases">
        <title>Region of Vitreoscilla genome that rescues sodium pumping deficiency in E. coli.</title>
        <authorList>
            <person name="Ma H."/>
            <person name="Webster D.A."/>
            <person name="Stark B.C."/>
        </authorList>
    </citation>
    <scope>NUCLEOTIDE SEQUENCE [GENOMIC DNA]</scope>
</reference>
<proteinExistence type="inferred from homology"/>
<comment type="function">
    <text evidence="1">Plays a role in cell envelope biogenesis, maintenance of cell envelope integrity and membrane homeostasis.</text>
</comment>
<comment type="subcellular location">
    <subcellularLocation>
        <location evidence="1">Cell inner membrane</location>
        <topology evidence="1">Multi-pass membrane protein</topology>
    </subcellularLocation>
</comment>
<comment type="similarity">
    <text evidence="1">Belongs to the YciB family.</text>
</comment>
<protein>
    <recommendedName>
        <fullName evidence="1">Inner membrane-spanning protein YciB</fullName>
    </recommendedName>
</protein>
<sequence>MNAKTLDAIKPFLDWIPLIVFFYIYKTTEGEGSEHIIAATTGLLIATLIVYGLMFVLQKFTLEKRQWLVVVLTVVFGGLTMAFQDDFYIRLKAPIINAVFAFGLAMSPLFLGGTPGIQKMLGPIFEMTPKQWMKLNWVWVGFFTLMAVLQALFAFVWVEYWAMFTAFGDMIVMVVFMVAQFWFLRGFMRKDIK</sequence>
<evidence type="ECO:0000255" key="1">
    <source>
        <dbReference type="HAMAP-Rule" id="MF_00189"/>
    </source>
</evidence>
<dbReference type="EMBL" id="AF114793">
    <property type="protein sequence ID" value="AAD41044.1"/>
    <property type="molecule type" value="Genomic_DNA"/>
</dbReference>
<dbReference type="GO" id="GO:0005886">
    <property type="term" value="C:plasma membrane"/>
    <property type="evidence" value="ECO:0007669"/>
    <property type="project" value="UniProtKB-SubCell"/>
</dbReference>
<dbReference type="HAMAP" id="MF_00189">
    <property type="entry name" value="YciB"/>
    <property type="match status" value="1"/>
</dbReference>
<dbReference type="InterPro" id="IPR006008">
    <property type="entry name" value="YciB"/>
</dbReference>
<dbReference type="NCBIfam" id="TIGR00997">
    <property type="entry name" value="ispZ"/>
    <property type="match status" value="1"/>
</dbReference>
<dbReference type="PANTHER" id="PTHR36917:SF1">
    <property type="entry name" value="INNER MEMBRANE-SPANNING PROTEIN YCIB"/>
    <property type="match status" value="1"/>
</dbReference>
<dbReference type="PANTHER" id="PTHR36917">
    <property type="entry name" value="INTRACELLULAR SEPTATION PROTEIN A-RELATED"/>
    <property type="match status" value="1"/>
</dbReference>
<dbReference type="Pfam" id="PF04279">
    <property type="entry name" value="IspA"/>
    <property type="match status" value="1"/>
</dbReference>
<gene>
    <name evidence="1" type="primary">yciB</name>
</gene>